<keyword id="KW-0966">Cell projection</keyword>
<keyword id="KW-0969">Cilium</keyword>
<keyword id="KW-0342">GTP-binding</keyword>
<keyword id="KW-0547">Nucleotide-binding</keyword>
<keyword id="KW-0597">Phosphoprotein</keyword>
<keyword id="KW-1185">Reference proteome</keyword>
<name>IFT22_MACFA</name>
<sequence>MLKAKILFVGPCESGKTVLANFLTESSDITEYSPTQGVRILEFENPHVTSNNKGTGCEFELWDCGGDAKFESCWPALMKDAHGVVIVFNADIPSHRKEMEMWYSCFVQQQSLQDTQCMLIAHHKPGSGDDKGSLSLSPPLNKLKLVHSNLEDDPEEIRMEFIKYLKSIINSMSESRDREEMSIMT</sequence>
<proteinExistence type="evidence at transcript level"/>
<reference key="1">
    <citation type="submission" date="2005-06" db="EMBL/GenBank/DDBJ databases">
        <title>DNA sequences of macaque genes expressed in brain or testis and its evolutionary implications.</title>
        <authorList>
            <consortium name="International consortium for macaque cDNA sequencing and analysis"/>
        </authorList>
    </citation>
    <scope>NUCLEOTIDE SEQUENCE [LARGE SCALE MRNA]</scope>
    <source>
        <tissue>Parietal cortex</tissue>
    </source>
</reference>
<dbReference type="EMBL" id="AB169889">
    <property type="protein sequence ID" value="BAE01970.1"/>
    <property type="molecule type" value="mRNA"/>
</dbReference>
<dbReference type="RefSeq" id="NP_001270065.1">
    <property type="nucleotide sequence ID" value="NM_001283136.1"/>
</dbReference>
<dbReference type="RefSeq" id="XP_045245546.1">
    <property type="nucleotide sequence ID" value="XM_045389611.1"/>
</dbReference>
<dbReference type="SMR" id="Q4R4K5"/>
<dbReference type="STRING" id="9541.ENSMFAP00000024977"/>
<dbReference type="Ensembl" id="ENSMFAT00000033124.2">
    <property type="protein sequence ID" value="ENSMFAP00000024977.1"/>
    <property type="gene ID" value="ENSMFAG00000044026.2"/>
</dbReference>
<dbReference type="GeneID" id="102119946"/>
<dbReference type="VEuPathDB" id="HostDB:ENSMFAG00000044026"/>
<dbReference type="eggNOG" id="ENOG502RXD4">
    <property type="taxonomic scope" value="Eukaryota"/>
</dbReference>
<dbReference type="GeneTree" id="ENSGT00390000013187"/>
<dbReference type="OMA" id="NERHDQE"/>
<dbReference type="Proteomes" id="UP000233100">
    <property type="component" value="Chromosome 3"/>
</dbReference>
<dbReference type="Bgee" id="ENSMFAG00000044026">
    <property type="expression patterns" value="Expressed in pituitary gland and 13 other cell types or tissues"/>
</dbReference>
<dbReference type="GO" id="GO:0005813">
    <property type="term" value="C:centrosome"/>
    <property type="evidence" value="ECO:0007669"/>
    <property type="project" value="Ensembl"/>
</dbReference>
<dbReference type="GO" id="GO:0005929">
    <property type="term" value="C:cilium"/>
    <property type="evidence" value="ECO:0007669"/>
    <property type="project" value="UniProtKB-SubCell"/>
</dbReference>
<dbReference type="GO" id="GO:0030992">
    <property type="term" value="C:intraciliary transport particle B"/>
    <property type="evidence" value="ECO:0000250"/>
    <property type="project" value="UniProtKB"/>
</dbReference>
<dbReference type="GO" id="GO:0005525">
    <property type="term" value="F:GTP binding"/>
    <property type="evidence" value="ECO:0007669"/>
    <property type="project" value="UniProtKB-KW"/>
</dbReference>
<dbReference type="FunFam" id="3.40.50.300:FF:001100">
    <property type="entry name" value="intraflagellar transport protein 22 homolog"/>
    <property type="match status" value="1"/>
</dbReference>
<dbReference type="Gene3D" id="3.40.50.300">
    <property type="entry name" value="P-loop containing nucleotide triphosphate hydrolases"/>
    <property type="match status" value="1"/>
</dbReference>
<dbReference type="InterPro" id="IPR027417">
    <property type="entry name" value="P-loop_NTPase"/>
</dbReference>
<dbReference type="PANTHER" id="PTHR24073">
    <property type="entry name" value="DRAB5-RELATED"/>
    <property type="match status" value="1"/>
</dbReference>
<dbReference type="Pfam" id="PF08477">
    <property type="entry name" value="Roc"/>
    <property type="match status" value="1"/>
</dbReference>
<dbReference type="SUPFAM" id="SSF52540">
    <property type="entry name" value="P-loop containing nucleoside triphosphate hydrolases"/>
    <property type="match status" value="1"/>
</dbReference>
<gene>
    <name type="primary">IFT22</name>
    <name type="synonym">RABL5</name>
    <name type="ORF">QnpA-17728</name>
</gene>
<accession>Q4R4K5</accession>
<comment type="function">
    <text evidence="1">Small GTPase-like component of the intraflagellar transport (IFT) complex B.</text>
</comment>
<comment type="subunit">
    <text evidence="1 2">Component of the IFT complex B, at least composed of IFT20, IFT22, IFT25, IFT27, IFT46, IFT52, TRAF3IP1/IFT54, IFT57, IFT74, IFT80, IFT81, and IFT88. Interacts with IFT88 (By similarity). Interacts with CFAP61 (By similarity).</text>
</comment>
<comment type="subcellular location">
    <subcellularLocation>
        <location evidence="1">Cell projection</location>
        <location evidence="1">Cilium</location>
    </subcellularLocation>
</comment>
<comment type="similarity">
    <text evidence="4">Belongs to the small GTPase superfamily. Rab family.</text>
</comment>
<organism>
    <name type="scientific">Macaca fascicularis</name>
    <name type="common">Crab-eating macaque</name>
    <name type="synonym">Cynomolgus monkey</name>
    <dbReference type="NCBI Taxonomy" id="9541"/>
    <lineage>
        <taxon>Eukaryota</taxon>
        <taxon>Metazoa</taxon>
        <taxon>Chordata</taxon>
        <taxon>Craniata</taxon>
        <taxon>Vertebrata</taxon>
        <taxon>Euteleostomi</taxon>
        <taxon>Mammalia</taxon>
        <taxon>Eutheria</taxon>
        <taxon>Euarchontoglires</taxon>
        <taxon>Primates</taxon>
        <taxon>Haplorrhini</taxon>
        <taxon>Catarrhini</taxon>
        <taxon>Cercopithecidae</taxon>
        <taxon>Cercopithecinae</taxon>
        <taxon>Macaca</taxon>
    </lineage>
</organism>
<evidence type="ECO:0000250" key="1"/>
<evidence type="ECO:0000250" key="2">
    <source>
        <dbReference type="UniProtKB" id="Q9DAI2"/>
    </source>
</evidence>
<evidence type="ECO:0000250" key="3">
    <source>
        <dbReference type="UniProtKB" id="Q9H7X7"/>
    </source>
</evidence>
<evidence type="ECO:0000305" key="4"/>
<protein>
    <recommendedName>
        <fullName>Intraflagellar transport protein 22 homolog</fullName>
    </recommendedName>
    <alternativeName>
        <fullName>Rab-like protein 5</fullName>
    </alternativeName>
</protein>
<feature type="chain" id="PRO_0000253734" description="Intraflagellar transport protein 22 homolog">
    <location>
        <begin position="1"/>
        <end position="185"/>
    </location>
</feature>
<feature type="binding site" evidence="1">
    <location>
        <begin position="10"/>
        <end position="17"/>
    </location>
    <ligand>
        <name>GTP</name>
        <dbReference type="ChEBI" id="CHEBI:37565"/>
    </ligand>
</feature>
<feature type="binding site" evidence="1">
    <location>
        <begin position="63"/>
        <end position="67"/>
    </location>
    <ligand>
        <name>GTP</name>
        <dbReference type="ChEBI" id="CHEBI:37565"/>
    </ligand>
</feature>
<feature type="binding site" evidence="1">
    <location>
        <begin position="123"/>
        <end position="126"/>
    </location>
    <ligand>
        <name>GTP</name>
        <dbReference type="ChEBI" id="CHEBI:37565"/>
    </ligand>
</feature>
<feature type="modified residue" description="Phosphoserine" evidence="3">
    <location>
        <position position="137"/>
    </location>
</feature>